<sequence>MKVWVDADACPGVIKEILFRVADRAKVEVTLVANHWMRIPPSPFINLKTVSSGFDVADDEIVKLLSAGDLVITADIPLASEVIDKGGVALNPRGELYTEQNIKSILNMRDFMDTMRASGVQTGGPAAIGASEKQAFGNQLDRFITKHHKPS</sequence>
<organism>
    <name type="scientific">Shewanella halifaxensis (strain HAW-EB4)</name>
    <dbReference type="NCBI Taxonomy" id="458817"/>
    <lineage>
        <taxon>Bacteria</taxon>
        <taxon>Pseudomonadati</taxon>
        <taxon>Pseudomonadota</taxon>
        <taxon>Gammaproteobacteria</taxon>
        <taxon>Alteromonadales</taxon>
        <taxon>Shewanellaceae</taxon>
        <taxon>Shewanella</taxon>
    </lineage>
</organism>
<feature type="chain" id="PRO_1000081385" description="UPF0178 protein Shal_3046">
    <location>
        <begin position="1"/>
        <end position="151"/>
    </location>
</feature>
<gene>
    <name type="ordered locus">Shal_3046</name>
</gene>
<evidence type="ECO:0000255" key="1">
    <source>
        <dbReference type="HAMAP-Rule" id="MF_00489"/>
    </source>
</evidence>
<name>Y3046_SHEHH</name>
<accession>B0TPE7</accession>
<comment type="similarity">
    <text evidence="1">Belongs to the UPF0178 family.</text>
</comment>
<proteinExistence type="inferred from homology"/>
<protein>
    <recommendedName>
        <fullName evidence="1">UPF0178 protein Shal_3046</fullName>
    </recommendedName>
</protein>
<reference key="1">
    <citation type="submission" date="2008-01" db="EMBL/GenBank/DDBJ databases">
        <title>Complete sequence of Shewanella halifaxensis HAW-EB4.</title>
        <authorList>
            <consortium name="US DOE Joint Genome Institute"/>
            <person name="Copeland A."/>
            <person name="Lucas S."/>
            <person name="Lapidus A."/>
            <person name="Glavina del Rio T."/>
            <person name="Dalin E."/>
            <person name="Tice H."/>
            <person name="Bruce D."/>
            <person name="Goodwin L."/>
            <person name="Pitluck S."/>
            <person name="Sims D."/>
            <person name="Brettin T."/>
            <person name="Detter J.C."/>
            <person name="Han C."/>
            <person name="Kuske C.R."/>
            <person name="Schmutz J."/>
            <person name="Larimer F."/>
            <person name="Land M."/>
            <person name="Hauser L."/>
            <person name="Kyrpides N."/>
            <person name="Kim E."/>
            <person name="Zhao J.-S."/>
            <person name="Richardson P."/>
        </authorList>
    </citation>
    <scope>NUCLEOTIDE SEQUENCE [LARGE SCALE GENOMIC DNA]</scope>
    <source>
        <strain>HAW-EB4</strain>
    </source>
</reference>
<dbReference type="EMBL" id="CP000931">
    <property type="protein sequence ID" value="ABZ77594.1"/>
    <property type="molecule type" value="Genomic_DNA"/>
</dbReference>
<dbReference type="RefSeq" id="WP_012278120.1">
    <property type="nucleotide sequence ID" value="NC_010334.1"/>
</dbReference>
<dbReference type="STRING" id="458817.Shal_3046"/>
<dbReference type="KEGG" id="shl:Shal_3046"/>
<dbReference type="eggNOG" id="COG1671">
    <property type="taxonomic scope" value="Bacteria"/>
</dbReference>
<dbReference type="HOGENOM" id="CLU_106619_2_1_6"/>
<dbReference type="OrthoDB" id="9798918at2"/>
<dbReference type="Proteomes" id="UP000001317">
    <property type="component" value="Chromosome"/>
</dbReference>
<dbReference type="CDD" id="cd18720">
    <property type="entry name" value="PIN_YqxD-like"/>
    <property type="match status" value="1"/>
</dbReference>
<dbReference type="HAMAP" id="MF_00489">
    <property type="entry name" value="UPF0178"/>
    <property type="match status" value="1"/>
</dbReference>
<dbReference type="InterPro" id="IPR003791">
    <property type="entry name" value="UPF0178"/>
</dbReference>
<dbReference type="NCBIfam" id="NF001095">
    <property type="entry name" value="PRK00124.1"/>
    <property type="match status" value="1"/>
</dbReference>
<dbReference type="PANTHER" id="PTHR35146">
    <property type="entry name" value="UPF0178 PROTEIN YAII"/>
    <property type="match status" value="1"/>
</dbReference>
<dbReference type="PANTHER" id="PTHR35146:SF1">
    <property type="entry name" value="UPF0178 PROTEIN YAII"/>
    <property type="match status" value="1"/>
</dbReference>
<dbReference type="Pfam" id="PF02639">
    <property type="entry name" value="DUF188"/>
    <property type="match status" value="1"/>
</dbReference>